<comment type="function">
    <text evidence="1">This protein binds to the 23S rRNA, and is important in its secondary structure. It is located near the subunit interface in the base of the L7/L12 stalk, and near the tRNA binding site of the peptidyltransferase center.</text>
</comment>
<comment type="subunit">
    <text evidence="1">Part of the 50S ribosomal subunit.</text>
</comment>
<comment type="similarity">
    <text evidence="1">Belongs to the universal ribosomal protein uL6 family.</text>
</comment>
<dbReference type="EMBL" id="CP000412">
    <property type="protein sequence ID" value="ABJ58022.1"/>
    <property type="molecule type" value="Genomic_DNA"/>
</dbReference>
<dbReference type="RefSeq" id="WP_002878187.1">
    <property type="nucleotide sequence ID" value="NC_008529.1"/>
</dbReference>
<dbReference type="SMR" id="Q04C00"/>
<dbReference type="GeneID" id="69668441"/>
<dbReference type="KEGG" id="lbu:LBUL_0365"/>
<dbReference type="HOGENOM" id="CLU_065464_1_2_9"/>
<dbReference type="BioCyc" id="LDEL321956:LBUL_RS01705-MONOMER"/>
<dbReference type="GO" id="GO:0022625">
    <property type="term" value="C:cytosolic large ribosomal subunit"/>
    <property type="evidence" value="ECO:0007669"/>
    <property type="project" value="TreeGrafter"/>
</dbReference>
<dbReference type="GO" id="GO:0019843">
    <property type="term" value="F:rRNA binding"/>
    <property type="evidence" value="ECO:0007669"/>
    <property type="project" value="UniProtKB-UniRule"/>
</dbReference>
<dbReference type="GO" id="GO:0003735">
    <property type="term" value="F:structural constituent of ribosome"/>
    <property type="evidence" value="ECO:0007669"/>
    <property type="project" value="InterPro"/>
</dbReference>
<dbReference type="GO" id="GO:0002181">
    <property type="term" value="P:cytoplasmic translation"/>
    <property type="evidence" value="ECO:0007669"/>
    <property type="project" value="TreeGrafter"/>
</dbReference>
<dbReference type="FunFam" id="3.90.930.12:FF:000001">
    <property type="entry name" value="50S ribosomal protein L6"/>
    <property type="match status" value="1"/>
</dbReference>
<dbReference type="FunFam" id="3.90.930.12:FF:000002">
    <property type="entry name" value="50S ribosomal protein L6"/>
    <property type="match status" value="1"/>
</dbReference>
<dbReference type="Gene3D" id="3.90.930.12">
    <property type="entry name" value="Ribosomal protein L6, alpha-beta domain"/>
    <property type="match status" value="2"/>
</dbReference>
<dbReference type="HAMAP" id="MF_01365_B">
    <property type="entry name" value="Ribosomal_uL6_B"/>
    <property type="match status" value="1"/>
</dbReference>
<dbReference type="InterPro" id="IPR000702">
    <property type="entry name" value="Ribosomal_uL6-like"/>
</dbReference>
<dbReference type="InterPro" id="IPR036789">
    <property type="entry name" value="Ribosomal_uL6-like_a/b-dom_sf"/>
</dbReference>
<dbReference type="InterPro" id="IPR020040">
    <property type="entry name" value="Ribosomal_uL6_a/b-dom"/>
</dbReference>
<dbReference type="InterPro" id="IPR019906">
    <property type="entry name" value="Ribosomal_uL6_bac-type"/>
</dbReference>
<dbReference type="InterPro" id="IPR002358">
    <property type="entry name" value="Ribosomal_uL6_CS"/>
</dbReference>
<dbReference type="NCBIfam" id="TIGR03654">
    <property type="entry name" value="L6_bact"/>
    <property type="match status" value="1"/>
</dbReference>
<dbReference type="PANTHER" id="PTHR11655">
    <property type="entry name" value="60S/50S RIBOSOMAL PROTEIN L6/L9"/>
    <property type="match status" value="1"/>
</dbReference>
<dbReference type="PANTHER" id="PTHR11655:SF14">
    <property type="entry name" value="LARGE RIBOSOMAL SUBUNIT PROTEIN UL6M"/>
    <property type="match status" value="1"/>
</dbReference>
<dbReference type="Pfam" id="PF00347">
    <property type="entry name" value="Ribosomal_L6"/>
    <property type="match status" value="2"/>
</dbReference>
<dbReference type="PIRSF" id="PIRSF002162">
    <property type="entry name" value="Ribosomal_L6"/>
    <property type="match status" value="1"/>
</dbReference>
<dbReference type="PRINTS" id="PR00059">
    <property type="entry name" value="RIBOSOMALL6"/>
</dbReference>
<dbReference type="SUPFAM" id="SSF56053">
    <property type="entry name" value="Ribosomal protein L6"/>
    <property type="match status" value="2"/>
</dbReference>
<dbReference type="PROSITE" id="PS00525">
    <property type="entry name" value="RIBOSOMAL_L6_1"/>
    <property type="match status" value="1"/>
</dbReference>
<name>RL6_LACDB</name>
<reference key="1">
    <citation type="journal article" date="2006" name="Proc. Natl. Acad. Sci. U.S.A.">
        <title>Comparative genomics of the lactic acid bacteria.</title>
        <authorList>
            <person name="Makarova K.S."/>
            <person name="Slesarev A."/>
            <person name="Wolf Y.I."/>
            <person name="Sorokin A."/>
            <person name="Mirkin B."/>
            <person name="Koonin E.V."/>
            <person name="Pavlov A."/>
            <person name="Pavlova N."/>
            <person name="Karamychev V."/>
            <person name="Polouchine N."/>
            <person name="Shakhova V."/>
            <person name="Grigoriev I."/>
            <person name="Lou Y."/>
            <person name="Rohksar D."/>
            <person name="Lucas S."/>
            <person name="Huang K."/>
            <person name="Goodstein D.M."/>
            <person name="Hawkins T."/>
            <person name="Plengvidhya V."/>
            <person name="Welker D."/>
            <person name="Hughes J."/>
            <person name="Goh Y."/>
            <person name="Benson A."/>
            <person name="Baldwin K."/>
            <person name="Lee J.-H."/>
            <person name="Diaz-Muniz I."/>
            <person name="Dosti B."/>
            <person name="Smeianov V."/>
            <person name="Wechter W."/>
            <person name="Barabote R."/>
            <person name="Lorca G."/>
            <person name="Altermann E."/>
            <person name="Barrangou R."/>
            <person name="Ganesan B."/>
            <person name="Xie Y."/>
            <person name="Rawsthorne H."/>
            <person name="Tamir D."/>
            <person name="Parker C."/>
            <person name="Breidt F."/>
            <person name="Broadbent J.R."/>
            <person name="Hutkins R."/>
            <person name="O'Sullivan D."/>
            <person name="Steele J."/>
            <person name="Unlu G."/>
            <person name="Saier M.H. Jr."/>
            <person name="Klaenhammer T."/>
            <person name="Richardson P."/>
            <person name="Kozyavkin S."/>
            <person name="Weimer B.C."/>
            <person name="Mills D.A."/>
        </authorList>
    </citation>
    <scope>NUCLEOTIDE SEQUENCE [LARGE SCALE GENOMIC DNA]</scope>
    <source>
        <strain>ATCC BAA-365 / Lb-18</strain>
    </source>
</reference>
<keyword id="KW-0687">Ribonucleoprotein</keyword>
<keyword id="KW-0689">Ribosomal protein</keyword>
<keyword id="KW-0694">RNA-binding</keyword>
<keyword id="KW-0699">rRNA-binding</keyword>
<protein>
    <recommendedName>
        <fullName evidence="1">Large ribosomal subunit protein uL6</fullName>
    </recommendedName>
    <alternativeName>
        <fullName evidence="2">50S ribosomal protein L6</fullName>
    </alternativeName>
</protein>
<proteinExistence type="inferred from homology"/>
<sequence length="176" mass="19273">MSRIGLKVINVPESVTVTKNGNEITVKGPKGELTREFDPRIKFEQEDGVIRFSRSNENDKAIHGTMRANLANMIEGVVNGYKKELKLIGVGYRAVAKNNVLTLNVGYSHPVEMKAPEGVTVTTSSATDVTIEGISKQVVGQFAAEIRAVRSPEPYKGKGIRYADEVVRRKEGKTGK</sequence>
<gene>
    <name evidence="1" type="primary">rplF</name>
    <name type="ordered locus">LBUL_0365</name>
</gene>
<feature type="chain" id="PRO_1000055247" description="Large ribosomal subunit protein uL6">
    <location>
        <begin position="1"/>
        <end position="176"/>
    </location>
</feature>
<organism>
    <name type="scientific">Lactobacillus delbrueckii subsp. bulgaricus (strain ATCC BAA-365 / Lb-18)</name>
    <dbReference type="NCBI Taxonomy" id="321956"/>
    <lineage>
        <taxon>Bacteria</taxon>
        <taxon>Bacillati</taxon>
        <taxon>Bacillota</taxon>
        <taxon>Bacilli</taxon>
        <taxon>Lactobacillales</taxon>
        <taxon>Lactobacillaceae</taxon>
        <taxon>Lactobacillus</taxon>
    </lineage>
</organism>
<accession>Q04C00</accession>
<evidence type="ECO:0000255" key="1">
    <source>
        <dbReference type="HAMAP-Rule" id="MF_01365"/>
    </source>
</evidence>
<evidence type="ECO:0000305" key="2"/>